<feature type="chain" id="PRO_1000119115" description="UDP-N-acetylglucosamine 1-carboxyvinyltransferase">
    <location>
        <begin position="1"/>
        <end position="424"/>
    </location>
</feature>
<feature type="active site" description="Proton donor" evidence="1">
    <location>
        <position position="117"/>
    </location>
</feature>
<feature type="binding site" evidence="1">
    <location>
        <begin position="22"/>
        <end position="23"/>
    </location>
    <ligand>
        <name>phosphoenolpyruvate</name>
        <dbReference type="ChEBI" id="CHEBI:58702"/>
    </ligand>
</feature>
<feature type="binding site" evidence="1">
    <location>
        <position position="93"/>
    </location>
    <ligand>
        <name>UDP-N-acetyl-alpha-D-glucosamine</name>
        <dbReference type="ChEBI" id="CHEBI:57705"/>
    </ligand>
</feature>
<feature type="binding site" evidence="1">
    <location>
        <begin position="162"/>
        <end position="165"/>
    </location>
    <ligand>
        <name>UDP-N-acetyl-alpha-D-glucosamine</name>
        <dbReference type="ChEBI" id="CHEBI:57705"/>
    </ligand>
</feature>
<feature type="binding site" evidence="1">
    <location>
        <position position="307"/>
    </location>
    <ligand>
        <name>UDP-N-acetyl-alpha-D-glucosamine</name>
        <dbReference type="ChEBI" id="CHEBI:57705"/>
    </ligand>
</feature>
<feature type="binding site" evidence="1">
    <location>
        <position position="329"/>
    </location>
    <ligand>
        <name>UDP-N-acetyl-alpha-D-glucosamine</name>
        <dbReference type="ChEBI" id="CHEBI:57705"/>
    </ligand>
</feature>
<feature type="modified residue" description="2-(S-cysteinyl)pyruvic acid O-phosphothioketal" evidence="1">
    <location>
        <position position="117"/>
    </location>
</feature>
<name>MURA_GLAP5</name>
<reference key="1">
    <citation type="journal article" date="2009" name="J. Bacteriol.">
        <title>Complete genome sequence of Haemophilus parasuis SH0165.</title>
        <authorList>
            <person name="Yue M."/>
            <person name="Yang F."/>
            <person name="Yang J."/>
            <person name="Bei W."/>
            <person name="Cai X."/>
            <person name="Chen L."/>
            <person name="Dong J."/>
            <person name="Zhou R."/>
            <person name="Jin M."/>
            <person name="Jin Q."/>
            <person name="Chen H."/>
        </authorList>
    </citation>
    <scope>NUCLEOTIDE SEQUENCE [LARGE SCALE GENOMIC DNA]</scope>
    <source>
        <strain>SH0165</strain>
    </source>
</reference>
<sequence>MEKFRVHGPFTLSGTVDISGAKNAALPILFAAILAEEPVILTNVPNLKDVETTVKILRKLGVVVERAENNAVHIDASKIDHYVAPYELVKTMRASIWALAPLVARFHQGQVSLPGGCTIGARPVDMHIAGLEKMGATITLDEGYVKAEVNGRLTGARILMDKVSVGATLSVMMAATLAKGTTTIENAAREPEIVDTAIFLNKMGAKITGAGTDTITIEGVERLGGCEHHIVPDRIETGTFLVAAAISGGRITCRGTKADTLDAVIEKLREAGMQVDVTENSITLDSLGMRPKAVNIRTMPHPGFPTDMQAQFTLLNVVANGTSKITETIFENRFMHIPELIRMGAKAEIEGNTAICHGVENLSGAEVMATDLRASISLVLAGCIANGQTIVDRIYHIDRGYEHIEDKLQKLGARIERFNAPFEE</sequence>
<accession>B8F4Y1</accession>
<protein>
    <recommendedName>
        <fullName evidence="1">UDP-N-acetylglucosamine 1-carboxyvinyltransferase</fullName>
        <ecNumber evidence="1">2.5.1.7</ecNumber>
    </recommendedName>
    <alternativeName>
        <fullName evidence="1">Enoylpyruvate transferase</fullName>
    </alternativeName>
    <alternativeName>
        <fullName evidence="1">UDP-N-acetylglucosamine enolpyruvyl transferase</fullName>
        <shortName evidence="1">EPT</shortName>
    </alternativeName>
</protein>
<gene>
    <name evidence="1" type="primary">murA</name>
    <name type="ordered locus">HAPS_0739</name>
</gene>
<organism>
    <name type="scientific">Glaesserella parasuis serovar 5 (strain SH0165)</name>
    <name type="common">Haemophilus parasuis</name>
    <dbReference type="NCBI Taxonomy" id="557723"/>
    <lineage>
        <taxon>Bacteria</taxon>
        <taxon>Pseudomonadati</taxon>
        <taxon>Pseudomonadota</taxon>
        <taxon>Gammaproteobacteria</taxon>
        <taxon>Pasteurellales</taxon>
        <taxon>Pasteurellaceae</taxon>
        <taxon>Glaesserella</taxon>
    </lineage>
</organism>
<comment type="function">
    <text evidence="1">Cell wall formation. Adds enolpyruvyl to UDP-N-acetylglucosamine.</text>
</comment>
<comment type="catalytic activity">
    <reaction evidence="1">
        <text>phosphoenolpyruvate + UDP-N-acetyl-alpha-D-glucosamine = UDP-N-acetyl-3-O-(1-carboxyvinyl)-alpha-D-glucosamine + phosphate</text>
        <dbReference type="Rhea" id="RHEA:18681"/>
        <dbReference type="ChEBI" id="CHEBI:43474"/>
        <dbReference type="ChEBI" id="CHEBI:57705"/>
        <dbReference type="ChEBI" id="CHEBI:58702"/>
        <dbReference type="ChEBI" id="CHEBI:68483"/>
        <dbReference type="EC" id="2.5.1.7"/>
    </reaction>
</comment>
<comment type="pathway">
    <text evidence="1">Cell wall biogenesis; peptidoglycan biosynthesis.</text>
</comment>
<comment type="subcellular location">
    <subcellularLocation>
        <location evidence="1">Cytoplasm</location>
    </subcellularLocation>
</comment>
<comment type="similarity">
    <text evidence="1">Belongs to the EPSP synthase family. MurA subfamily.</text>
</comment>
<keyword id="KW-0131">Cell cycle</keyword>
<keyword id="KW-0132">Cell division</keyword>
<keyword id="KW-0133">Cell shape</keyword>
<keyword id="KW-0961">Cell wall biogenesis/degradation</keyword>
<keyword id="KW-0963">Cytoplasm</keyword>
<keyword id="KW-0573">Peptidoglycan synthesis</keyword>
<keyword id="KW-0670">Pyruvate</keyword>
<keyword id="KW-1185">Reference proteome</keyword>
<keyword id="KW-0808">Transferase</keyword>
<dbReference type="EC" id="2.5.1.7" evidence="1"/>
<dbReference type="EMBL" id="CP001321">
    <property type="protein sequence ID" value="ACL32383.1"/>
    <property type="molecule type" value="Genomic_DNA"/>
</dbReference>
<dbReference type="RefSeq" id="WP_012621887.1">
    <property type="nucleotide sequence ID" value="NC_011852.1"/>
</dbReference>
<dbReference type="SMR" id="B8F4Y1"/>
<dbReference type="STRING" id="557723.HAPS_0739"/>
<dbReference type="KEGG" id="hap:HAPS_0739"/>
<dbReference type="PATRIC" id="fig|557723.8.peg.738"/>
<dbReference type="HOGENOM" id="CLU_027387_0_0_6"/>
<dbReference type="UniPathway" id="UPA00219"/>
<dbReference type="Proteomes" id="UP000006743">
    <property type="component" value="Chromosome"/>
</dbReference>
<dbReference type="GO" id="GO:0005737">
    <property type="term" value="C:cytoplasm"/>
    <property type="evidence" value="ECO:0007669"/>
    <property type="project" value="UniProtKB-SubCell"/>
</dbReference>
<dbReference type="GO" id="GO:0008760">
    <property type="term" value="F:UDP-N-acetylglucosamine 1-carboxyvinyltransferase activity"/>
    <property type="evidence" value="ECO:0007669"/>
    <property type="project" value="UniProtKB-UniRule"/>
</dbReference>
<dbReference type="GO" id="GO:0051301">
    <property type="term" value="P:cell division"/>
    <property type="evidence" value="ECO:0007669"/>
    <property type="project" value="UniProtKB-KW"/>
</dbReference>
<dbReference type="GO" id="GO:0071555">
    <property type="term" value="P:cell wall organization"/>
    <property type="evidence" value="ECO:0007669"/>
    <property type="project" value="UniProtKB-KW"/>
</dbReference>
<dbReference type="GO" id="GO:0009252">
    <property type="term" value="P:peptidoglycan biosynthetic process"/>
    <property type="evidence" value="ECO:0007669"/>
    <property type="project" value="UniProtKB-UniRule"/>
</dbReference>
<dbReference type="GO" id="GO:0008360">
    <property type="term" value="P:regulation of cell shape"/>
    <property type="evidence" value="ECO:0007669"/>
    <property type="project" value="UniProtKB-KW"/>
</dbReference>
<dbReference type="GO" id="GO:0019277">
    <property type="term" value="P:UDP-N-acetylgalactosamine biosynthetic process"/>
    <property type="evidence" value="ECO:0007669"/>
    <property type="project" value="InterPro"/>
</dbReference>
<dbReference type="CDD" id="cd01555">
    <property type="entry name" value="UdpNAET"/>
    <property type="match status" value="1"/>
</dbReference>
<dbReference type="FunFam" id="3.65.10.10:FF:000002">
    <property type="entry name" value="UDP-N-acetylglucosamine 1-carboxyvinyltransferase"/>
    <property type="match status" value="1"/>
</dbReference>
<dbReference type="Gene3D" id="3.65.10.10">
    <property type="entry name" value="Enolpyruvate transferase domain"/>
    <property type="match status" value="2"/>
</dbReference>
<dbReference type="HAMAP" id="MF_00111">
    <property type="entry name" value="MurA"/>
    <property type="match status" value="1"/>
</dbReference>
<dbReference type="InterPro" id="IPR001986">
    <property type="entry name" value="Enolpyruvate_Tfrase_dom"/>
</dbReference>
<dbReference type="InterPro" id="IPR036968">
    <property type="entry name" value="Enolpyruvate_Tfrase_sf"/>
</dbReference>
<dbReference type="InterPro" id="IPR050068">
    <property type="entry name" value="MurA_subfamily"/>
</dbReference>
<dbReference type="InterPro" id="IPR013792">
    <property type="entry name" value="RNA3'P_cycl/enolpyr_Trfase_a/b"/>
</dbReference>
<dbReference type="InterPro" id="IPR005750">
    <property type="entry name" value="UDP_GlcNAc_COvinyl_MurA"/>
</dbReference>
<dbReference type="NCBIfam" id="TIGR01072">
    <property type="entry name" value="murA"/>
    <property type="match status" value="1"/>
</dbReference>
<dbReference type="NCBIfam" id="NF006873">
    <property type="entry name" value="PRK09369.1"/>
    <property type="match status" value="1"/>
</dbReference>
<dbReference type="PANTHER" id="PTHR43783">
    <property type="entry name" value="UDP-N-ACETYLGLUCOSAMINE 1-CARBOXYVINYLTRANSFERASE"/>
    <property type="match status" value="1"/>
</dbReference>
<dbReference type="PANTHER" id="PTHR43783:SF1">
    <property type="entry name" value="UDP-N-ACETYLGLUCOSAMINE 1-CARBOXYVINYLTRANSFERASE"/>
    <property type="match status" value="1"/>
</dbReference>
<dbReference type="Pfam" id="PF00275">
    <property type="entry name" value="EPSP_synthase"/>
    <property type="match status" value="1"/>
</dbReference>
<dbReference type="SUPFAM" id="SSF55205">
    <property type="entry name" value="EPT/RTPC-like"/>
    <property type="match status" value="1"/>
</dbReference>
<proteinExistence type="inferred from homology"/>
<evidence type="ECO:0000255" key="1">
    <source>
        <dbReference type="HAMAP-Rule" id="MF_00111"/>
    </source>
</evidence>